<organism>
    <name type="scientific">Streptococcus pyogenes serotype M28 (strain MGAS6180)</name>
    <dbReference type="NCBI Taxonomy" id="319701"/>
    <lineage>
        <taxon>Bacteria</taxon>
        <taxon>Bacillati</taxon>
        <taxon>Bacillota</taxon>
        <taxon>Bacilli</taxon>
        <taxon>Lactobacillales</taxon>
        <taxon>Streptococcaceae</taxon>
        <taxon>Streptococcus</taxon>
    </lineage>
</organism>
<gene>
    <name evidence="1" type="primary">cinA</name>
    <name type="ordered locus">M28_Spy1784</name>
</gene>
<comment type="similarity">
    <text evidence="1">Belongs to the CinA family.</text>
</comment>
<reference key="1">
    <citation type="journal article" date="2005" name="J. Infect. Dis.">
        <title>Genome sequence of a serotype M28 strain of group A Streptococcus: potential new insights into puerperal sepsis and bacterial disease specificity.</title>
        <authorList>
            <person name="Green N.M."/>
            <person name="Zhang S."/>
            <person name="Porcella S.F."/>
            <person name="Nagiec M.J."/>
            <person name="Barbian K.D."/>
            <person name="Beres S.B."/>
            <person name="Lefebvre R.B."/>
            <person name="Musser J.M."/>
        </authorList>
    </citation>
    <scope>NUCLEOTIDE SEQUENCE [LARGE SCALE GENOMIC DNA]</scope>
    <source>
        <strain>MGAS6180</strain>
    </source>
</reference>
<name>CINA_STRPM</name>
<sequence>MKAELIAVGTEILTGQIVNTNAQFLSEKMAELGIDVYFQTAVGDNEERLLSVITTASQRSDLVILCGGLGPTKDDLTKQTLAKYLRKDLVYDEQACQKLDDFFAKRKPSSRTPNNERQAQVIEGSIPLPNKTGLAVGGFITVDGISYVVLPGPPSELKPMVNEELVPLLSKQYSTLYSKVLRFFGIGESQLVTVLSDFIENQTDPTIAPYAKTGEVTLRLSTKTENQALADKKLGQLEAQLLSRKTLEGQPLADVFYGYGEDNSLARETFELLVKYDKTITAAESLTAGLFQSTLASFPGASQVFNGGFVTYSMEEKAKMLGLPLEELKSHGVVSAYTAEGMAEQARLLTGADIGVSLTGVAGPDMLEEQPAGTVFIGLATQNKVESIKVLISGRSRLDVRYIATLHAFNMVRKTLLKLENLL</sequence>
<feature type="chain" id="PRO_1000058736" description="Putative competence-damage inducible protein">
    <location>
        <begin position="1"/>
        <end position="423"/>
    </location>
</feature>
<evidence type="ECO:0000255" key="1">
    <source>
        <dbReference type="HAMAP-Rule" id="MF_00226"/>
    </source>
</evidence>
<accession>Q48QW6</accession>
<proteinExistence type="inferred from homology"/>
<dbReference type="EMBL" id="CP000056">
    <property type="protein sequence ID" value="AAX72894.1"/>
    <property type="molecule type" value="Genomic_DNA"/>
</dbReference>
<dbReference type="RefSeq" id="WP_011285266.1">
    <property type="nucleotide sequence ID" value="NC_007296.2"/>
</dbReference>
<dbReference type="SMR" id="Q48QW6"/>
<dbReference type="KEGG" id="spb:M28_Spy1784"/>
<dbReference type="HOGENOM" id="CLU_030805_9_3_9"/>
<dbReference type="CDD" id="cd00885">
    <property type="entry name" value="cinA"/>
    <property type="match status" value="1"/>
</dbReference>
<dbReference type="Gene3D" id="3.30.70.2860">
    <property type="match status" value="1"/>
</dbReference>
<dbReference type="Gene3D" id="3.90.950.20">
    <property type="entry name" value="CinA-like"/>
    <property type="match status" value="1"/>
</dbReference>
<dbReference type="Gene3D" id="3.40.980.10">
    <property type="entry name" value="MoaB/Mog-like domain"/>
    <property type="match status" value="1"/>
</dbReference>
<dbReference type="HAMAP" id="MF_00226_B">
    <property type="entry name" value="CinA_B"/>
    <property type="match status" value="1"/>
</dbReference>
<dbReference type="InterPro" id="IPR050101">
    <property type="entry name" value="CinA"/>
</dbReference>
<dbReference type="InterPro" id="IPR036653">
    <property type="entry name" value="CinA-like_C"/>
</dbReference>
<dbReference type="InterPro" id="IPR008136">
    <property type="entry name" value="CinA_C"/>
</dbReference>
<dbReference type="InterPro" id="IPR041424">
    <property type="entry name" value="CinA_KH"/>
</dbReference>
<dbReference type="InterPro" id="IPR008135">
    <property type="entry name" value="Competence-induced_CinA"/>
</dbReference>
<dbReference type="InterPro" id="IPR036425">
    <property type="entry name" value="MoaB/Mog-like_dom_sf"/>
</dbReference>
<dbReference type="InterPro" id="IPR001453">
    <property type="entry name" value="MoaB/Mog_dom"/>
</dbReference>
<dbReference type="NCBIfam" id="TIGR00200">
    <property type="entry name" value="cinA_nterm"/>
    <property type="match status" value="1"/>
</dbReference>
<dbReference type="NCBIfam" id="TIGR00177">
    <property type="entry name" value="molyb_syn"/>
    <property type="match status" value="1"/>
</dbReference>
<dbReference type="NCBIfam" id="TIGR00199">
    <property type="entry name" value="PncC_domain"/>
    <property type="match status" value="1"/>
</dbReference>
<dbReference type="NCBIfam" id="NF001813">
    <property type="entry name" value="PRK00549.1"/>
    <property type="match status" value="1"/>
</dbReference>
<dbReference type="PANTHER" id="PTHR13939">
    <property type="entry name" value="NICOTINAMIDE-NUCLEOTIDE AMIDOHYDROLASE PNCC"/>
    <property type="match status" value="1"/>
</dbReference>
<dbReference type="PANTHER" id="PTHR13939:SF0">
    <property type="entry name" value="NMN AMIDOHYDROLASE-LIKE PROTEIN YFAY"/>
    <property type="match status" value="1"/>
</dbReference>
<dbReference type="Pfam" id="PF02464">
    <property type="entry name" value="CinA"/>
    <property type="match status" value="1"/>
</dbReference>
<dbReference type="Pfam" id="PF18146">
    <property type="entry name" value="CinA_KH"/>
    <property type="match status" value="1"/>
</dbReference>
<dbReference type="Pfam" id="PF00994">
    <property type="entry name" value="MoCF_biosynth"/>
    <property type="match status" value="1"/>
</dbReference>
<dbReference type="PIRSF" id="PIRSF006728">
    <property type="entry name" value="CinA"/>
    <property type="match status" value="1"/>
</dbReference>
<dbReference type="SMART" id="SM00852">
    <property type="entry name" value="MoCF_biosynth"/>
    <property type="match status" value="1"/>
</dbReference>
<dbReference type="SUPFAM" id="SSF142433">
    <property type="entry name" value="CinA-like"/>
    <property type="match status" value="1"/>
</dbReference>
<dbReference type="SUPFAM" id="SSF53218">
    <property type="entry name" value="Molybdenum cofactor biosynthesis proteins"/>
    <property type="match status" value="1"/>
</dbReference>
<protein>
    <recommendedName>
        <fullName evidence="1">Putative competence-damage inducible protein</fullName>
    </recommendedName>
</protein>